<name>RLMB_VIBCH</name>
<protein>
    <recommendedName>
        <fullName evidence="1">23S rRNA (guanosine-2'-O-)-methyltransferase RlmB</fullName>
        <ecNumber evidence="1">2.1.1.185</ecNumber>
    </recommendedName>
    <alternativeName>
        <fullName evidence="1">23S rRNA (guanosine2251 2'-O)-methyltransferase</fullName>
    </alternativeName>
    <alternativeName>
        <fullName evidence="1">23S rRNA Gm2251 2'-O-methyltransferase</fullName>
    </alternativeName>
</protein>
<accession>Q9KNY2</accession>
<reference key="1">
    <citation type="journal article" date="2000" name="Nature">
        <title>DNA sequence of both chromosomes of the cholera pathogen Vibrio cholerae.</title>
        <authorList>
            <person name="Heidelberg J.F."/>
            <person name="Eisen J.A."/>
            <person name="Nelson W.C."/>
            <person name="Clayton R.A."/>
            <person name="Gwinn M.L."/>
            <person name="Dodson R.J."/>
            <person name="Haft D.H."/>
            <person name="Hickey E.K."/>
            <person name="Peterson J.D."/>
            <person name="Umayam L.A."/>
            <person name="Gill S.R."/>
            <person name="Nelson K.E."/>
            <person name="Read T.D."/>
            <person name="Tettelin H."/>
            <person name="Richardson D.L."/>
            <person name="Ermolaeva M.D."/>
            <person name="Vamathevan J.J."/>
            <person name="Bass S."/>
            <person name="Qin H."/>
            <person name="Dragoi I."/>
            <person name="Sellers P."/>
            <person name="McDonald L.A."/>
            <person name="Utterback T.R."/>
            <person name="Fleischmann R.D."/>
            <person name="Nierman W.C."/>
            <person name="White O."/>
            <person name="Salzberg S.L."/>
            <person name="Smith H.O."/>
            <person name="Colwell R.R."/>
            <person name="Mekalanos J.J."/>
            <person name="Venter J.C."/>
            <person name="Fraser C.M."/>
        </authorList>
    </citation>
    <scope>NUCLEOTIDE SEQUENCE [LARGE SCALE GENOMIC DNA]</scope>
    <source>
        <strain>ATCC 39315 / El Tor Inaba N16961</strain>
    </source>
</reference>
<sequence>MSNELIYGIHAVNAVLQRDPARFVEAYVLKGRQDDRLLPVLNELMRLGVSIQEMSRKALDDKAEGANHQGLIARVKPARQLNENDLDDILAQHEQPLLLVLDGVTDPHNLGACLRNADAAGVAAVIVPKDKSAPLTATVSKVACGAAETVPLVRVTNLARTMRALQEKGVWFVGTAGEATHDIYQSKLTGSLAIVMGAEGDGMRRLTRETCDDLIKIPMAGSVSSLNVSVACGVCLFEAVRQRMANR</sequence>
<feature type="chain" id="PRO_0000159805" description="23S rRNA (guanosine-2'-O-)-methyltransferase RlmB">
    <location>
        <begin position="1"/>
        <end position="247"/>
    </location>
</feature>
<feature type="binding site" evidence="1">
    <location>
        <position position="197"/>
    </location>
    <ligand>
        <name>S-adenosyl-L-methionine</name>
        <dbReference type="ChEBI" id="CHEBI:59789"/>
    </ligand>
</feature>
<feature type="binding site" evidence="1">
    <location>
        <position position="217"/>
    </location>
    <ligand>
        <name>S-adenosyl-L-methionine</name>
        <dbReference type="ChEBI" id="CHEBI:59789"/>
    </ligand>
</feature>
<feature type="binding site" evidence="1">
    <location>
        <position position="226"/>
    </location>
    <ligand>
        <name>S-adenosyl-L-methionine</name>
        <dbReference type="ChEBI" id="CHEBI:59789"/>
    </ligand>
</feature>
<proteinExistence type="inferred from homology"/>
<dbReference type="EC" id="2.1.1.185" evidence="1"/>
<dbReference type="EMBL" id="AE003852">
    <property type="protein sequence ID" value="AAF95739.1"/>
    <property type="molecule type" value="Genomic_DNA"/>
</dbReference>
<dbReference type="PIR" id="B82055">
    <property type="entry name" value="B82055"/>
</dbReference>
<dbReference type="RefSeq" id="NP_232226.1">
    <property type="nucleotide sequence ID" value="NC_002505.1"/>
</dbReference>
<dbReference type="RefSeq" id="WP_000064143.1">
    <property type="nucleotide sequence ID" value="NZ_LT906614.1"/>
</dbReference>
<dbReference type="SMR" id="Q9KNY2"/>
<dbReference type="STRING" id="243277.VC_2598"/>
<dbReference type="DNASU" id="2615615"/>
<dbReference type="EnsemblBacteria" id="AAF95739">
    <property type="protein sequence ID" value="AAF95739"/>
    <property type="gene ID" value="VC_2598"/>
</dbReference>
<dbReference type="KEGG" id="vch:VC_2598"/>
<dbReference type="PATRIC" id="fig|243277.26.peg.2477"/>
<dbReference type="eggNOG" id="COG0566">
    <property type="taxonomic scope" value="Bacteria"/>
</dbReference>
<dbReference type="HOGENOM" id="CLU_021322_0_1_6"/>
<dbReference type="Proteomes" id="UP000000584">
    <property type="component" value="Chromosome 1"/>
</dbReference>
<dbReference type="GO" id="GO:0005829">
    <property type="term" value="C:cytosol"/>
    <property type="evidence" value="ECO:0000318"/>
    <property type="project" value="GO_Central"/>
</dbReference>
<dbReference type="GO" id="GO:0003723">
    <property type="term" value="F:RNA binding"/>
    <property type="evidence" value="ECO:0007669"/>
    <property type="project" value="InterPro"/>
</dbReference>
<dbReference type="GO" id="GO:0070039">
    <property type="term" value="F:rRNA (guanosine-2'-O-)-methyltransferase activity"/>
    <property type="evidence" value="ECO:0000318"/>
    <property type="project" value="GO_Central"/>
</dbReference>
<dbReference type="CDD" id="cd18103">
    <property type="entry name" value="SpoU-like_RlmB"/>
    <property type="match status" value="1"/>
</dbReference>
<dbReference type="FunFam" id="3.40.1280.10:FF:000005">
    <property type="entry name" value="23S rRNA (guanosine-2'-O-)-methyltransferase RlmB"/>
    <property type="match status" value="1"/>
</dbReference>
<dbReference type="FunFam" id="3.30.1330.30:FF:000007">
    <property type="entry name" value="23S rRNA methyltransferase"/>
    <property type="match status" value="1"/>
</dbReference>
<dbReference type="Gene3D" id="3.30.1330.30">
    <property type="match status" value="1"/>
</dbReference>
<dbReference type="Gene3D" id="3.40.1280.10">
    <property type="match status" value="1"/>
</dbReference>
<dbReference type="HAMAP" id="MF_01887">
    <property type="entry name" value="23SrRNA_methyltr_B"/>
    <property type="match status" value="1"/>
</dbReference>
<dbReference type="InterPro" id="IPR024915">
    <property type="entry name" value="23S_rRNA_MeTrfase_RlmB"/>
</dbReference>
<dbReference type="InterPro" id="IPR029028">
    <property type="entry name" value="Alpha/beta_knot_MTases"/>
</dbReference>
<dbReference type="InterPro" id="IPR029064">
    <property type="entry name" value="Ribosomal_eL30-like_sf"/>
</dbReference>
<dbReference type="InterPro" id="IPR004441">
    <property type="entry name" value="rRNA_MeTrfase_TrmH"/>
</dbReference>
<dbReference type="InterPro" id="IPR001537">
    <property type="entry name" value="SpoU_MeTrfase"/>
</dbReference>
<dbReference type="InterPro" id="IPR013123">
    <property type="entry name" value="SpoU_subst-bd"/>
</dbReference>
<dbReference type="InterPro" id="IPR029026">
    <property type="entry name" value="tRNA_m1G_MTases_N"/>
</dbReference>
<dbReference type="NCBIfam" id="NF008386">
    <property type="entry name" value="PRK11181.1"/>
    <property type="match status" value="1"/>
</dbReference>
<dbReference type="NCBIfam" id="TIGR00186">
    <property type="entry name" value="rRNA_methyl_3"/>
    <property type="match status" value="1"/>
</dbReference>
<dbReference type="PANTHER" id="PTHR46429">
    <property type="entry name" value="23S RRNA (GUANOSINE-2'-O-)-METHYLTRANSFERASE RLMB"/>
    <property type="match status" value="1"/>
</dbReference>
<dbReference type="PANTHER" id="PTHR46429:SF1">
    <property type="entry name" value="23S RRNA (GUANOSINE-2'-O-)-METHYLTRANSFERASE RLMB"/>
    <property type="match status" value="1"/>
</dbReference>
<dbReference type="Pfam" id="PF00588">
    <property type="entry name" value="SpoU_methylase"/>
    <property type="match status" value="1"/>
</dbReference>
<dbReference type="Pfam" id="PF08032">
    <property type="entry name" value="SpoU_sub_bind"/>
    <property type="match status" value="1"/>
</dbReference>
<dbReference type="SMART" id="SM00967">
    <property type="entry name" value="SpoU_sub_bind"/>
    <property type="match status" value="1"/>
</dbReference>
<dbReference type="SUPFAM" id="SSF75217">
    <property type="entry name" value="alpha/beta knot"/>
    <property type="match status" value="1"/>
</dbReference>
<dbReference type="SUPFAM" id="SSF55315">
    <property type="entry name" value="L30e-like"/>
    <property type="match status" value="1"/>
</dbReference>
<comment type="function">
    <text evidence="1">Specifically methylates the ribose of guanosine 2251 in 23S rRNA.</text>
</comment>
<comment type="catalytic activity">
    <reaction evidence="1">
        <text>guanosine(2251) in 23S rRNA + S-adenosyl-L-methionine = 2'-O-methylguanosine(2251) in 23S rRNA + S-adenosyl-L-homocysteine + H(+)</text>
        <dbReference type="Rhea" id="RHEA:24140"/>
        <dbReference type="Rhea" id="RHEA-COMP:10239"/>
        <dbReference type="Rhea" id="RHEA-COMP:10241"/>
        <dbReference type="ChEBI" id="CHEBI:15378"/>
        <dbReference type="ChEBI" id="CHEBI:57856"/>
        <dbReference type="ChEBI" id="CHEBI:59789"/>
        <dbReference type="ChEBI" id="CHEBI:74269"/>
        <dbReference type="ChEBI" id="CHEBI:74445"/>
        <dbReference type="EC" id="2.1.1.185"/>
    </reaction>
</comment>
<comment type="subcellular location">
    <subcellularLocation>
        <location evidence="1">Cytoplasm</location>
    </subcellularLocation>
</comment>
<comment type="similarity">
    <text evidence="1">Belongs to the class IV-like SAM-binding methyltransferase superfamily. RNA methyltransferase TrmH family. RlmB subfamily.</text>
</comment>
<evidence type="ECO:0000255" key="1">
    <source>
        <dbReference type="HAMAP-Rule" id="MF_01887"/>
    </source>
</evidence>
<gene>
    <name evidence="1" type="primary">rlmB</name>
    <name type="ordered locus">VC_2598</name>
</gene>
<keyword id="KW-0963">Cytoplasm</keyword>
<keyword id="KW-0489">Methyltransferase</keyword>
<keyword id="KW-1185">Reference proteome</keyword>
<keyword id="KW-0698">rRNA processing</keyword>
<keyword id="KW-0949">S-adenosyl-L-methionine</keyword>
<keyword id="KW-0808">Transferase</keyword>
<organism>
    <name type="scientific">Vibrio cholerae serotype O1 (strain ATCC 39315 / El Tor Inaba N16961)</name>
    <dbReference type="NCBI Taxonomy" id="243277"/>
    <lineage>
        <taxon>Bacteria</taxon>
        <taxon>Pseudomonadati</taxon>
        <taxon>Pseudomonadota</taxon>
        <taxon>Gammaproteobacteria</taxon>
        <taxon>Vibrionales</taxon>
        <taxon>Vibrionaceae</taxon>
        <taxon>Vibrio</taxon>
    </lineage>
</organism>